<gene>
    <name evidence="8" type="primary">SPX4</name>
    <name evidence="9" type="ordered locus">Os03g0827500</name>
    <name evidence="9" type="ordered locus">LOC_Os03g61200</name>
    <name evidence="11" type="ORF">OsJ_13205</name>
    <name evidence="10" type="ORF">OSJNBa0010E04.24</name>
</gene>
<accession>Q10B79</accession>
<accession>A0A0P0W5I5</accession>
<accession>A3APA3</accession>
<accession>Q0DM53</accession>
<accession>Q10B78</accession>
<accession>Q8SAX5</accession>
<protein>
    <recommendedName>
        <fullName evidence="8">SPX domain-containing protein 4</fullName>
    </recommendedName>
    <alternativeName>
        <fullName evidence="8">Protein SPX DOMAIN GENE 4</fullName>
        <shortName evidence="8">OsSPX4</shortName>
    </alternativeName>
</protein>
<comment type="function">
    <text evidence="5 6">Inositol polyphosphate sensor that associates with transcription factors to regulate Pi starvation responses (PubMed:27080106). The SPX domain provides a basic binding surface for inositol polyphosphate signaling molecules (PubMed:27080106). Interacts with PHR2 to inhibit its translocation to the nucleus and repress its DNA-binding activity, and then negatively regulate Pi signaling (PubMed:24692424).</text>
</comment>
<comment type="subunit">
    <text evidence="5 6 7">Homodimer (PubMed:24692424). Interacts (via N-terminus) with PHR2 (via C-terminus) in the presence of inositol polyphosphate (PubMed:24692424, PubMed:27080106). Interacts with BHLH6 (PubMed:33128314).</text>
</comment>
<comment type="interaction">
    <interactant intactId="EBI-16205145">
        <id>Q10B79-1</id>
    </interactant>
    <interactant intactId="EBI-16205114">
        <id>Q6F6A2</id>
        <label>PHR</label>
    </interactant>
    <organismsDiffer>false</organismsDiffer>
    <experiments>2</experiments>
</comment>
<comment type="subcellular location">
    <subcellularLocation>
        <location evidence="4">Membrane</location>
    </subcellularLocation>
    <subcellularLocation>
        <location evidence="5">Nucleus</location>
    </subcellularLocation>
    <subcellularLocation>
        <location evidence="5">Cytoplasm</location>
    </subcellularLocation>
    <text>Unlike PubMed:19566645, PubMed:24692424 cannot find a membrane localization.</text>
</comment>
<comment type="alternative products">
    <event type="alternative splicing"/>
    <isoform>
        <id>Q10B79-1</id>
        <name>1</name>
        <sequence type="displayed"/>
    </isoform>
    <isoform>
        <id>Q10B79-2</id>
        <name>2</name>
        <sequence type="described" ref="VSP_039757 VSP_039758"/>
    </isoform>
</comment>
<comment type="tissue specificity">
    <text evidence="4 5">Widely expressed (PubMed:19566645). Detected in root cells, with the exception of epidermis, and in mesophyll and vascular bundles in leaves (PubMed:24692424).</text>
</comment>
<comment type="induction">
    <text evidence="3 4 5">Up-regulated during cold stress (PubMed:19508276). Not regulated by Pi-starvation (PubMed:19566645, PubMed:24692424).</text>
</comment>
<comment type="PTM">
    <text evidence="5">Degraded under Pi starvation conditions through the ubiquitin/26S proteasome pathway.</text>
</comment>
<comment type="disruption phenotype">
    <text evidence="5">Growth inhibition, Pi accumulation in shoots and up-regulation of phosphate starvation-induced (PSI) genes downstream of PHR2 under high phosphate conditions.</text>
</comment>
<comment type="sequence caution" evidence="9">
    <conflict type="erroneous gene model prediction">
        <sequence resource="EMBL-CDS" id="BAF13685"/>
    </conflict>
</comment>
<comment type="sequence caution" evidence="9">
    <conflict type="erroneous initiation">
        <sequence resource="EMBL-CDS" id="EAZ29142"/>
    </conflict>
    <text>Truncated N-terminus.</text>
</comment>
<keyword id="KW-0025">Alternative splicing</keyword>
<keyword id="KW-0963">Cytoplasm</keyword>
<keyword id="KW-0472">Membrane</keyword>
<keyword id="KW-0539">Nucleus</keyword>
<keyword id="KW-1185">Reference proteome</keyword>
<name>SPX4_ORYSJ</name>
<sequence length="320" mass="35772">MKFGKDFRSHLEETLPAWRDKYLAYKSLKKLIKNLPPDGDPPPVAAAAEVPAGDGDGDGGIALGNWFARVLDMELQKLNDFYIEREEWYVIRLQVLKERIERVKAKKNGAFTSKSEFTEEMLEIRKAFVIIHGEMILLQTYSSLNFAGLVKILKKYDKRTGGLLSLPFTQRARHQPFFTTEPLTRLVRECEANLELLFPIEAEVLESASSSAKLQPQNDDAASHDPASSVDVETSDVYRSTLAAMKAIQGLRKASSTYNPLSLARFFHGEDGEACSGAITSESDSYSDSQIEDAEDDDKEVQSREQNTAQNAAEGQPRDE</sequence>
<reference key="1">
    <citation type="journal article" date="2005" name="Genome Res.">
        <title>Sequence, annotation, and analysis of synteny between rice chromosome 3 and diverged grass species.</title>
        <authorList>
            <consortium name="The rice chromosome 3 sequencing consortium"/>
            <person name="Buell C.R."/>
            <person name="Yuan Q."/>
            <person name="Ouyang S."/>
            <person name="Liu J."/>
            <person name="Zhu W."/>
            <person name="Wang A."/>
            <person name="Maiti R."/>
            <person name="Haas B."/>
            <person name="Wortman J."/>
            <person name="Pertea M."/>
            <person name="Jones K.M."/>
            <person name="Kim M."/>
            <person name="Overton L."/>
            <person name="Tsitrin T."/>
            <person name="Fadrosh D."/>
            <person name="Bera J."/>
            <person name="Weaver B."/>
            <person name="Jin S."/>
            <person name="Johri S."/>
            <person name="Reardon M."/>
            <person name="Webb K."/>
            <person name="Hill J."/>
            <person name="Moffat K."/>
            <person name="Tallon L."/>
            <person name="Van Aken S."/>
            <person name="Lewis M."/>
            <person name="Utterback T."/>
            <person name="Feldblyum T."/>
            <person name="Zismann V."/>
            <person name="Iobst S."/>
            <person name="Hsiao J."/>
            <person name="de Vazeille A.R."/>
            <person name="Salzberg S.L."/>
            <person name="White O."/>
            <person name="Fraser C.M."/>
            <person name="Yu Y."/>
            <person name="Kim H."/>
            <person name="Rambo T."/>
            <person name="Currie J."/>
            <person name="Collura K."/>
            <person name="Kernodle-Thompson S."/>
            <person name="Wei F."/>
            <person name="Kudrna K."/>
            <person name="Ammiraju J.S.S."/>
            <person name="Luo M."/>
            <person name="Goicoechea J.L."/>
            <person name="Wing R.A."/>
            <person name="Henry D."/>
            <person name="Oates R."/>
            <person name="Palmer M."/>
            <person name="Pries G."/>
            <person name="Saski C."/>
            <person name="Simmons J."/>
            <person name="Soderlund C."/>
            <person name="Nelson W."/>
            <person name="de la Bastide M."/>
            <person name="Spiegel L."/>
            <person name="Nascimento L."/>
            <person name="Huang E."/>
            <person name="Preston R."/>
            <person name="Zutavern T."/>
            <person name="Palmer L."/>
            <person name="O'Shaughnessy A."/>
            <person name="Dike S."/>
            <person name="McCombie W.R."/>
            <person name="Minx P."/>
            <person name="Cordum H."/>
            <person name="Wilson R."/>
            <person name="Jin W."/>
            <person name="Lee H.R."/>
            <person name="Jiang J."/>
            <person name="Jackson S."/>
        </authorList>
    </citation>
    <scope>NUCLEOTIDE SEQUENCE [LARGE SCALE GENOMIC DNA]</scope>
    <source>
        <strain>cv. Nipponbare</strain>
    </source>
</reference>
<reference key="2">
    <citation type="journal article" date="2005" name="Nature">
        <title>The map-based sequence of the rice genome.</title>
        <authorList>
            <consortium name="International rice genome sequencing project (IRGSP)"/>
        </authorList>
    </citation>
    <scope>NUCLEOTIDE SEQUENCE [LARGE SCALE GENOMIC DNA]</scope>
    <source>
        <strain>cv. Nipponbare</strain>
    </source>
</reference>
<reference key="3">
    <citation type="journal article" date="2008" name="Nucleic Acids Res.">
        <title>The rice annotation project database (RAP-DB): 2008 update.</title>
        <authorList>
            <consortium name="The rice annotation project (RAP)"/>
        </authorList>
    </citation>
    <scope>GENOME REANNOTATION</scope>
    <source>
        <strain>cv. Nipponbare</strain>
    </source>
</reference>
<reference key="4">
    <citation type="journal article" date="2013" name="Rice">
        <title>Improvement of the Oryza sativa Nipponbare reference genome using next generation sequence and optical map data.</title>
        <authorList>
            <person name="Kawahara Y."/>
            <person name="de la Bastide M."/>
            <person name="Hamilton J.P."/>
            <person name="Kanamori H."/>
            <person name="McCombie W.R."/>
            <person name="Ouyang S."/>
            <person name="Schwartz D.C."/>
            <person name="Tanaka T."/>
            <person name="Wu J."/>
            <person name="Zhou S."/>
            <person name="Childs K.L."/>
            <person name="Davidson R.M."/>
            <person name="Lin H."/>
            <person name="Quesada-Ocampo L."/>
            <person name="Vaillancourt B."/>
            <person name="Sakai H."/>
            <person name="Lee S.S."/>
            <person name="Kim J."/>
            <person name="Numa H."/>
            <person name="Itoh T."/>
            <person name="Buell C.R."/>
            <person name="Matsumoto T."/>
        </authorList>
    </citation>
    <scope>GENOME REANNOTATION</scope>
    <source>
        <strain>cv. Nipponbare</strain>
    </source>
</reference>
<reference key="5">
    <citation type="journal article" date="2005" name="PLoS Biol.">
        <title>The genomes of Oryza sativa: a history of duplications.</title>
        <authorList>
            <person name="Yu J."/>
            <person name="Wang J."/>
            <person name="Lin W."/>
            <person name="Li S."/>
            <person name="Li H."/>
            <person name="Zhou J."/>
            <person name="Ni P."/>
            <person name="Dong W."/>
            <person name="Hu S."/>
            <person name="Zeng C."/>
            <person name="Zhang J."/>
            <person name="Zhang Y."/>
            <person name="Li R."/>
            <person name="Xu Z."/>
            <person name="Li S."/>
            <person name="Li X."/>
            <person name="Zheng H."/>
            <person name="Cong L."/>
            <person name="Lin L."/>
            <person name="Yin J."/>
            <person name="Geng J."/>
            <person name="Li G."/>
            <person name="Shi J."/>
            <person name="Liu J."/>
            <person name="Lv H."/>
            <person name="Li J."/>
            <person name="Wang J."/>
            <person name="Deng Y."/>
            <person name="Ran L."/>
            <person name="Shi X."/>
            <person name="Wang X."/>
            <person name="Wu Q."/>
            <person name="Li C."/>
            <person name="Ren X."/>
            <person name="Wang J."/>
            <person name="Wang X."/>
            <person name="Li D."/>
            <person name="Liu D."/>
            <person name="Zhang X."/>
            <person name="Ji Z."/>
            <person name="Zhao W."/>
            <person name="Sun Y."/>
            <person name="Zhang Z."/>
            <person name="Bao J."/>
            <person name="Han Y."/>
            <person name="Dong L."/>
            <person name="Ji J."/>
            <person name="Chen P."/>
            <person name="Wu S."/>
            <person name="Liu J."/>
            <person name="Xiao Y."/>
            <person name="Bu D."/>
            <person name="Tan J."/>
            <person name="Yang L."/>
            <person name="Ye C."/>
            <person name="Zhang J."/>
            <person name="Xu J."/>
            <person name="Zhou Y."/>
            <person name="Yu Y."/>
            <person name="Zhang B."/>
            <person name="Zhuang S."/>
            <person name="Wei H."/>
            <person name="Liu B."/>
            <person name="Lei M."/>
            <person name="Yu H."/>
            <person name="Li Y."/>
            <person name="Xu H."/>
            <person name="Wei S."/>
            <person name="He X."/>
            <person name="Fang L."/>
            <person name="Zhang Z."/>
            <person name="Zhang Y."/>
            <person name="Huang X."/>
            <person name="Su Z."/>
            <person name="Tong W."/>
            <person name="Li J."/>
            <person name="Tong Z."/>
            <person name="Li S."/>
            <person name="Ye J."/>
            <person name="Wang L."/>
            <person name="Fang L."/>
            <person name="Lei T."/>
            <person name="Chen C.-S."/>
            <person name="Chen H.-C."/>
            <person name="Xu Z."/>
            <person name="Li H."/>
            <person name="Huang H."/>
            <person name="Zhang F."/>
            <person name="Xu H."/>
            <person name="Li N."/>
            <person name="Zhao C."/>
            <person name="Li S."/>
            <person name="Dong L."/>
            <person name="Huang Y."/>
            <person name="Li L."/>
            <person name="Xi Y."/>
            <person name="Qi Q."/>
            <person name="Li W."/>
            <person name="Zhang B."/>
            <person name="Hu W."/>
            <person name="Zhang Y."/>
            <person name="Tian X."/>
            <person name="Jiao Y."/>
            <person name="Liang X."/>
            <person name="Jin J."/>
            <person name="Gao L."/>
            <person name="Zheng W."/>
            <person name="Hao B."/>
            <person name="Liu S.-M."/>
            <person name="Wang W."/>
            <person name="Yuan L."/>
            <person name="Cao M."/>
            <person name="McDermott J."/>
            <person name="Samudrala R."/>
            <person name="Wang J."/>
            <person name="Wong G.K.-S."/>
            <person name="Yang H."/>
        </authorList>
    </citation>
    <scope>NUCLEOTIDE SEQUENCE [LARGE SCALE GENOMIC DNA]</scope>
    <source>
        <strain>cv. Nipponbare</strain>
    </source>
</reference>
<reference key="6">
    <citation type="journal article" date="2003" name="Science">
        <title>Collection, mapping, and annotation of over 28,000 cDNA clones from japonica rice.</title>
        <authorList>
            <consortium name="The rice full-length cDNA consortium"/>
        </authorList>
    </citation>
    <scope>NUCLEOTIDE SEQUENCE [LARGE SCALE MRNA]</scope>
    <source>
        <strain>cv. Nipponbare</strain>
    </source>
</reference>
<reference key="7">
    <citation type="journal article" date="2009" name="J. Integr. Plant Biol.">
        <title>Regulation of OsSPX1 and OsSPX3 on expression of OsSPX domain genes and Pi-starvation signaling in rice.</title>
        <authorList>
            <person name="Wang Z."/>
            <person name="Hu H."/>
            <person name="Huang H."/>
            <person name="Duan K."/>
            <person name="Wu Z."/>
            <person name="Wu P."/>
        </authorList>
    </citation>
    <scope>TISSUE SPECIFICITY</scope>
    <scope>LACK OF INDUCTION BY PHOSPHATE</scope>
    <scope>SUBCELLULAR LOCATION</scope>
</reference>
<reference key="8">
    <citation type="journal article" date="2009" name="Plant Biotechnol. J.">
        <title>Increased expression of OsSPX1 enhances cold/subfreezing tolerance in tobacco and Arabidopsis thaliana.</title>
        <authorList>
            <person name="Zhao L."/>
            <person name="Liu F."/>
            <person name="Xu W."/>
            <person name="Di C."/>
            <person name="Zhou S."/>
            <person name="Xue Y."/>
            <person name="Yu J."/>
            <person name="Su Z."/>
        </authorList>
    </citation>
    <scope>GENE FAMILY</scope>
    <scope>NOMENCLATURE</scope>
    <scope>INDUCTION BY COLD</scope>
</reference>
<reference key="9">
    <citation type="journal article" date="2014" name="Plant Cell">
        <title>SPX4 negatively regulates phosphate signaling and homeostasis through its interaction with PHR2 in Rice.</title>
        <authorList>
            <person name="Lv Q."/>
            <person name="Zhong Y."/>
            <person name="Wang Y."/>
            <person name="Wang Z."/>
            <person name="Zhang L."/>
            <person name="Shi J."/>
            <person name="Wu Z."/>
            <person name="Liu Y."/>
            <person name="Mao C."/>
            <person name="Yi K."/>
            <person name="Wu P."/>
        </authorList>
    </citation>
    <scope>INTERACTION WITH PHR2</scope>
    <scope>DISRUPTION PHENOTYPE</scope>
    <scope>LACK OF INDUCTION BY PHOSPHATE</scope>
    <scope>TISSUE SPECIFICITY</scope>
    <scope>DEGRADATION</scope>
    <scope>SUBCELLULAR LOCATION</scope>
    <scope>SUBUNIT</scope>
</reference>
<reference key="10">
    <citation type="journal article" date="2016" name="Science">
        <title>Control of eukaryotic phosphate homeostasis by inositol polyphosphate sensor domains.</title>
        <authorList>
            <person name="Wild R."/>
            <person name="Gerasimaite R."/>
            <person name="Jung J.Y."/>
            <person name="Truffault V."/>
            <person name="Pavlovic I."/>
            <person name="Schmidt A."/>
            <person name="Saiardi A."/>
            <person name="Jessen H.J."/>
            <person name="Poirier Y."/>
            <person name="Hothorn M."/>
            <person name="Mayer A."/>
        </authorList>
    </citation>
    <scope>FUNCTION</scope>
    <scope>MUTAGENESIS OF TYR-25; LYS-29 AND LYS-155</scope>
    <scope>INTERACTION WITH PHR2</scope>
</reference>
<reference key="11">
    <citation type="journal article" date="2021" name="Plant J.">
        <title>OsbHLH6 interacts with OsSPX4 and regulates the phosphate-starvation response in rice.</title>
        <authorList>
            <person name="He Q."/>
            <person name="Lu H."/>
            <person name="Guo H."/>
            <person name="Wang Y."/>
            <person name="Zhao P."/>
            <person name="Li Y."/>
            <person name="Wang F."/>
            <person name="Xu J."/>
            <person name="Mo X."/>
            <person name="Mao C."/>
        </authorList>
    </citation>
    <scope>INTERACTION WITH BHLH6</scope>
</reference>
<feature type="chain" id="PRO_0000398353" description="SPX domain-containing protein 4">
    <location>
        <begin position="1"/>
        <end position="320"/>
    </location>
</feature>
<feature type="domain" description="SPX" evidence="1">
    <location>
        <begin position="1"/>
        <end position="170"/>
    </location>
</feature>
<feature type="region of interest" description="Disordered" evidence="2">
    <location>
        <begin position="209"/>
        <end position="233"/>
    </location>
</feature>
<feature type="region of interest" description="Disordered" evidence="2">
    <location>
        <begin position="275"/>
        <end position="320"/>
    </location>
</feature>
<feature type="compositionally biased region" description="Polar residues" evidence="2">
    <location>
        <begin position="278"/>
        <end position="289"/>
    </location>
</feature>
<feature type="compositionally biased region" description="Acidic residues" evidence="2">
    <location>
        <begin position="290"/>
        <end position="299"/>
    </location>
</feature>
<feature type="compositionally biased region" description="Polar residues" evidence="2">
    <location>
        <begin position="304"/>
        <end position="313"/>
    </location>
</feature>
<feature type="splice variant" id="VSP_039757" description="In isoform 2." evidence="9">
    <original>LVKILKKYD</original>
    <variation>ELIKPSWLV</variation>
    <location>
        <begin position="149"/>
        <end position="157"/>
    </location>
</feature>
<feature type="splice variant" id="VSP_039758" description="In isoform 2." evidence="9">
    <location>
        <begin position="158"/>
        <end position="320"/>
    </location>
</feature>
<feature type="mutagenesis site" description="In PBC; loss of inositol polyphosphate binding; when associated with A-29 and A-155." evidence="6">
    <original>Y</original>
    <variation>F</variation>
    <location>
        <position position="25"/>
    </location>
</feature>
<feature type="mutagenesis site" description="In PBC; loss of inositol polyphosphate binding; when associated with F-25 and A-155." evidence="6">
    <original>K</original>
    <variation>A</variation>
    <location>
        <position position="29"/>
    </location>
</feature>
<feature type="mutagenesis site" description="In PBC; loss of inositol polyphosphate binding; when associated with F-25 and A-29." evidence="6">
    <original>K</original>
    <variation>A</variation>
    <location>
        <position position="155"/>
    </location>
</feature>
<feature type="sequence conflict" description="In Ref. 6; AK066364." evidence="9" ref="6">
    <original>R</original>
    <variation>C</variation>
    <location>
        <position position="125"/>
    </location>
</feature>
<dbReference type="EMBL" id="AC096687">
    <property type="protein sequence ID" value="AAL79759.1"/>
    <property type="molecule type" value="Genomic_DNA"/>
</dbReference>
<dbReference type="EMBL" id="DP000009">
    <property type="protein sequence ID" value="ABF99664.1"/>
    <property type="molecule type" value="Genomic_DNA"/>
</dbReference>
<dbReference type="EMBL" id="DP000009">
    <property type="protein sequence ID" value="ABF99665.1"/>
    <property type="molecule type" value="Genomic_DNA"/>
</dbReference>
<dbReference type="EMBL" id="AP008209">
    <property type="protein sequence ID" value="BAF13685.1"/>
    <property type="status" value="ALT_SEQ"/>
    <property type="molecule type" value="Genomic_DNA"/>
</dbReference>
<dbReference type="EMBL" id="AP014959">
    <property type="protein sequence ID" value="BAS87167.1"/>
    <property type="molecule type" value="Genomic_DNA"/>
</dbReference>
<dbReference type="EMBL" id="CM000140">
    <property type="protein sequence ID" value="EAZ29142.1"/>
    <property type="status" value="ALT_INIT"/>
    <property type="molecule type" value="Genomic_DNA"/>
</dbReference>
<dbReference type="EMBL" id="AK066364">
    <property type="status" value="NOT_ANNOTATED_CDS"/>
    <property type="molecule type" value="mRNA"/>
</dbReference>
<dbReference type="RefSeq" id="XP_015630412.1">
    <property type="nucleotide sequence ID" value="XM_015774926.1"/>
</dbReference>
<dbReference type="SMR" id="Q10B79"/>
<dbReference type="DIP" id="DIP-62041N"/>
<dbReference type="FunCoup" id="Q10B79">
    <property type="interactions" value="4"/>
</dbReference>
<dbReference type="IntAct" id="Q10B79">
    <property type="interactions" value="1"/>
</dbReference>
<dbReference type="STRING" id="39947.Q10B79"/>
<dbReference type="PaxDb" id="39947-Q10B79"/>
<dbReference type="EnsemblPlants" id="Os03t0827500-01">
    <molecule id="Q10B79-1"/>
    <property type="protein sequence ID" value="Os03t0827500-01"/>
    <property type="gene ID" value="Os03g0827500"/>
</dbReference>
<dbReference type="Gramene" id="Os03t0827500-01">
    <molecule id="Q10B79-1"/>
    <property type="protein sequence ID" value="Os03t0827500-01"/>
    <property type="gene ID" value="Os03g0827500"/>
</dbReference>
<dbReference type="KEGG" id="dosa:Os03g0827500"/>
<dbReference type="eggNOG" id="KOG1161">
    <property type="taxonomic scope" value="Eukaryota"/>
</dbReference>
<dbReference type="InParanoid" id="Q10B79"/>
<dbReference type="OMA" id="MDIYRST"/>
<dbReference type="OrthoDB" id="6493944at2759"/>
<dbReference type="Proteomes" id="UP000000763">
    <property type="component" value="Chromosome 3"/>
</dbReference>
<dbReference type="Proteomes" id="UP000007752">
    <property type="component" value="Chromosome 3"/>
</dbReference>
<dbReference type="Proteomes" id="UP000059680">
    <property type="component" value="Chromosome 3"/>
</dbReference>
<dbReference type="ExpressionAtlas" id="Q10B79">
    <property type="expression patterns" value="baseline and differential"/>
</dbReference>
<dbReference type="GO" id="GO:0005737">
    <property type="term" value="C:cytoplasm"/>
    <property type="evidence" value="ECO:0007669"/>
    <property type="project" value="UniProtKB-SubCell"/>
</dbReference>
<dbReference type="GO" id="GO:0016020">
    <property type="term" value="C:membrane"/>
    <property type="evidence" value="ECO:0007669"/>
    <property type="project" value="UniProtKB-SubCell"/>
</dbReference>
<dbReference type="GO" id="GO:0005634">
    <property type="term" value="C:nucleus"/>
    <property type="evidence" value="ECO:0007669"/>
    <property type="project" value="UniProtKB-SubCell"/>
</dbReference>
<dbReference type="GO" id="GO:0070417">
    <property type="term" value="P:cellular response to cold"/>
    <property type="evidence" value="ECO:0000270"/>
    <property type="project" value="UniProtKB"/>
</dbReference>
<dbReference type="GO" id="GO:0016036">
    <property type="term" value="P:cellular response to phosphate starvation"/>
    <property type="evidence" value="ECO:0007669"/>
    <property type="project" value="InterPro"/>
</dbReference>
<dbReference type="CDD" id="cd14481">
    <property type="entry name" value="SPX_AtSPX1_like"/>
    <property type="match status" value="1"/>
</dbReference>
<dbReference type="InterPro" id="IPR004331">
    <property type="entry name" value="SPX_dom"/>
</dbReference>
<dbReference type="InterPro" id="IPR031142">
    <property type="entry name" value="SPX_prot"/>
</dbReference>
<dbReference type="PANTHER" id="PTHR45978">
    <property type="entry name" value="SPX DOMAIN-CONTAINING PROTEIN 3"/>
    <property type="match status" value="1"/>
</dbReference>
<dbReference type="PANTHER" id="PTHR45978:SF7">
    <property type="entry name" value="SPX DOMAIN-CONTAINING PROTEIN 4"/>
    <property type="match status" value="1"/>
</dbReference>
<dbReference type="Pfam" id="PF03105">
    <property type="entry name" value="SPX"/>
    <property type="match status" value="2"/>
</dbReference>
<dbReference type="PROSITE" id="PS51382">
    <property type="entry name" value="SPX"/>
    <property type="match status" value="1"/>
</dbReference>
<evidence type="ECO:0000255" key="1">
    <source>
        <dbReference type="PROSITE-ProRule" id="PRU00714"/>
    </source>
</evidence>
<evidence type="ECO:0000256" key="2">
    <source>
        <dbReference type="SAM" id="MobiDB-lite"/>
    </source>
</evidence>
<evidence type="ECO:0000269" key="3">
    <source>
    </source>
</evidence>
<evidence type="ECO:0000269" key="4">
    <source>
    </source>
</evidence>
<evidence type="ECO:0000269" key="5">
    <source>
    </source>
</evidence>
<evidence type="ECO:0000269" key="6">
    <source>
    </source>
</evidence>
<evidence type="ECO:0000269" key="7">
    <source>
    </source>
</evidence>
<evidence type="ECO:0000303" key="8">
    <source>
    </source>
</evidence>
<evidence type="ECO:0000305" key="9"/>
<evidence type="ECO:0000312" key="10">
    <source>
        <dbReference type="EMBL" id="AAL79759.1"/>
    </source>
</evidence>
<evidence type="ECO:0000312" key="11">
    <source>
        <dbReference type="EMBL" id="EAZ29142.1"/>
    </source>
</evidence>
<proteinExistence type="evidence at protein level"/>
<organism>
    <name type="scientific">Oryza sativa subsp. japonica</name>
    <name type="common">Rice</name>
    <dbReference type="NCBI Taxonomy" id="39947"/>
    <lineage>
        <taxon>Eukaryota</taxon>
        <taxon>Viridiplantae</taxon>
        <taxon>Streptophyta</taxon>
        <taxon>Embryophyta</taxon>
        <taxon>Tracheophyta</taxon>
        <taxon>Spermatophyta</taxon>
        <taxon>Magnoliopsida</taxon>
        <taxon>Liliopsida</taxon>
        <taxon>Poales</taxon>
        <taxon>Poaceae</taxon>
        <taxon>BOP clade</taxon>
        <taxon>Oryzoideae</taxon>
        <taxon>Oryzeae</taxon>
        <taxon>Oryzinae</taxon>
        <taxon>Oryza</taxon>
        <taxon>Oryza sativa</taxon>
    </lineage>
</organism>